<name>LUXS_VIBVU</name>
<gene>
    <name evidence="1" type="primary">luxS</name>
    <name type="ordered locus">VV1_1608</name>
</gene>
<keyword id="KW-0071">Autoinducer synthesis</keyword>
<keyword id="KW-0408">Iron</keyword>
<keyword id="KW-0456">Lyase</keyword>
<keyword id="KW-0479">Metal-binding</keyword>
<keyword id="KW-0673">Quorum sensing</keyword>
<organism>
    <name type="scientific">Vibrio vulnificus (strain CMCP6)</name>
    <dbReference type="NCBI Taxonomy" id="216895"/>
    <lineage>
        <taxon>Bacteria</taxon>
        <taxon>Pseudomonadati</taxon>
        <taxon>Pseudomonadota</taxon>
        <taxon>Gammaproteobacteria</taxon>
        <taxon>Vibrionales</taxon>
        <taxon>Vibrionaceae</taxon>
        <taxon>Vibrio</taxon>
    </lineage>
</organism>
<sequence length="172" mass="18900">MPLLDSFTVDHTRMHAPAVRVAKTMQTPKGDTITVFDLRFTAPNKDILSEKGIHTLEHLYAGFMRKHLNGASVEIIDISPMGCRTGFYMSLIGAPSEQDVASAWTASMEDVLKVESQNKIPELNEYQCGTAAMHSLDEAKQIAQNILAAGISVNKNDELALPEAMLKELKVD</sequence>
<dbReference type="EC" id="4.4.1.21" evidence="1"/>
<dbReference type="EMBL" id="AF305637">
    <property type="protein sequence ID" value="AAK15466.1"/>
    <property type="molecule type" value="Genomic_DNA"/>
</dbReference>
<dbReference type="EMBL" id="AF401230">
    <property type="protein sequence ID" value="AAK95612.1"/>
    <property type="molecule type" value="Genomic_DNA"/>
</dbReference>
<dbReference type="EMBL" id="AE016795">
    <property type="protein sequence ID" value="AAO10029.1"/>
    <property type="molecule type" value="Genomic_DNA"/>
</dbReference>
<dbReference type="RefSeq" id="WP_011079537.1">
    <property type="nucleotide sequence ID" value="NC_004459.3"/>
</dbReference>
<dbReference type="SMR" id="Q9AHK1"/>
<dbReference type="KEGG" id="vvu:VV1_1608"/>
<dbReference type="HOGENOM" id="CLU_107531_2_0_6"/>
<dbReference type="Proteomes" id="UP000002275">
    <property type="component" value="Chromosome 1"/>
</dbReference>
<dbReference type="GO" id="GO:0005506">
    <property type="term" value="F:iron ion binding"/>
    <property type="evidence" value="ECO:0007669"/>
    <property type="project" value="InterPro"/>
</dbReference>
<dbReference type="GO" id="GO:0043768">
    <property type="term" value="F:S-ribosylhomocysteine lyase activity"/>
    <property type="evidence" value="ECO:0007669"/>
    <property type="project" value="UniProtKB-UniRule"/>
</dbReference>
<dbReference type="GO" id="GO:0009372">
    <property type="term" value="P:quorum sensing"/>
    <property type="evidence" value="ECO:0007669"/>
    <property type="project" value="UniProtKB-UniRule"/>
</dbReference>
<dbReference type="FunFam" id="3.30.1360.80:FF:000001">
    <property type="entry name" value="S-ribosylhomocysteine lyase"/>
    <property type="match status" value="1"/>
</dbReference>
<dbReference type="Gene3D" id="3.30.1360.80">
    <property type="entry name" value="S-ribosylhomocysteinase (LuxS)"/>
    <property type="match status" value="1"/>
</dbReference>
<dbReference type="HAMAP" id="MF_00091">
    <property type="entry name" value="LuxS"/>
    <property type="match status" value="1"/>
</dbReference>
<dbReference type="InterPro" id="IPR037005">
    <property type="entry name" value="LuxS_sf"/>
</dbReference>
<dbReference type="InterPro" id="IPR011249">
    <property type="entry name" value="Metalloenz_LuxS/M16"/>
</dbReference>
<dbReference type="InterPro" id="IPR003815">
    <property type="entry name" value="S-ribosylhomocysteinase"/>
</dbReference>
<dbReference type="NCBIfam" id="NF002602">
    <property type="entry name" value="PRK02260.1-2"/>
    <property type="match status" value="1"/>
</dbReference>
<dbReference type="PANTHER" id="PTHR35799">
    <property type="entry name" value="S-RIBOSYLHOMOCYSTEINE LYASE"/>
    <property type="match status" value="1"/>
</dbReference>
<dbReference type="PANTHER" id="PTHR35799:SF1">
    <property type="entry name" value="S-RIBOSYLHOMOCYSTEINE LYASE"/>
    <property type="match status" value="1"/>
</dbReference>
<dbReference type="Pfam" id="PF02664">
    <property type="entry name" value="LuxS"/>
    <property type="match status" value="1"/>
</dbReference>
<dbReference type="PIRSF" id="PIRSF006160">
    <property type="entry name" value="AI2"/>
    <property type="match status" value="1"/>
</dbReference>
<dbReference type="PRINTS" id="PR01487">
    <property type="entry name" value="LUXSPROTEIN"/>
</dbReference>
<dbReference type="SUPFAM" id="SSF63411">
    <property type="entry name" value="LuxS/MPP-like metallohydrolase"/>
    <property type="match status" value="1"/>
</dbReference>
<reference key="1">
    <citation type="submission" date="2000-09" db="EMBL/GenBank/DDBJ databases">
        <title>LuxS quorum sensing system regulates virulence of Vibrio vulnificus.</title>
        <authorList>
            <person name="Kim S.Y."/>
            <person name="Lee S.E."/>
            <person name="Kim Y.R."/>
            <person name="Jin Y.S."/>
            <person name="Ryu P.Y."/>
            <person name="Chung S.S."/>
            <person name="Rhee J.H."/>
        </authorList>
    </citation>
    <scope>NUCLEOTIDE SEQUENCE [GENOMIC DNA]</scope>
</reference>
<reference key="2">
    <citation type="submission" date="2001-07" db="EMBL/GenBank/DDBJ databases">
        <title>LuxS quorum sensing system in Vibrio vulnificus ATCC29307.</title>
        <authorList>
            <person name="Baek C.H."/>
            <person name="Park D.K."/>
            <person name="Lee K.E."/>
            <person name="Kim Y.T."/>
            <person name="Hwang W."/>
            <person name="Kim K.S."/>
        </authorList>
    </citation>
    <scope>NUCLEOTIDE SEQUENCE [GENOMIC DNA]</scope>
    <source>
        <strain>ATCC 29307 / CDC A8694</strain>
    </source>
</reference>
<reference key="3">
    <citation type="submission" date="2002-12" db="EMBL/GenBank/DDBJ databases">
        <title>Complete genome sequence of Vibrio vulnificus CMCP6.</title>
        <authorList>
            <person name="Rhee J.H."/>
            <person name="Kim S.Y."/>
            <person name="Chung S.S."/>
            <person name="Kim J.J."/>
            <person name="Moon Y.H."/>
            <person name="Jeong H."/>
            <person name="Choy H.E."/>
        </authorList>
    </citation>
    <scope>NUCLEOTIDE SEQUENCE [LARGE SCALE GENOMIC DNA]</scope>
    <source>
        <strain>CMCP6</strain>
    </source>
</reference>
<protein>
    <recommendedName>
        <fullName evidence="1">S-ribosylhomocysteine lyase</fullName>
        <ecNumber evidence="1">4.4.1.21</ecNumber>
    </recommendedName>
    <alternativeName>
        <fullName evidence="1">AI-2 synthesis protein</fullName>
    </alternativeName>
    <alternativeName>
        <fullName evidence="1">Autoinducer-2 production protein LuxS</fullName>
    </alternativeName>
</protein>
<evidence type="ECO:0000255" key="1">
    <source>
        <dbReference type="HAMAP-Rule" id="MF_00091"/>
    </source>
</evidence>
<comment type="function">
    <text evidence="1">Involved in the synthesis of autoinducer 2 (AI-2) which is secreted by bacteria and is used to communicate both the cell density and the metabolic potential of the environment. The regulation of gene expression in response to changes in cell density is called quorum sensing. Catalyzes the transformation of S-ribosylhomocysteine (RHC) to homocysteine (HC) and 4,5-dihydroxy-2,3-pentadione (DPD).</text>
</comment>
<comment type="catalytic activity">
    <reaction evidence="1">
        <text>S-(5-deoxy-D-ribos-5-yl)-L-homocysteine = (S)-4,5-dihydroxypentane-2,3-dione + L-homocysteine</text>
        <dbReference type="Rhea" id="RHEA:17753"/>
        <dbReference type="ChEBI" id="CHEBI:29484"/>
        <dbReference type="ChEBI" id="CHEBI:58195"/>
        <dbReference type="ChEBI" id="CHEBI:58199"/>
        <dbReference type="EC" id="4.4.1.21"/>
    </reaction>
</comment>
<comment type="cofactor">
    <cofactor evidence="1">
        <name>Fe cation</name>
        <dbReference type="ChEBI" id="CHEBI:24875"/>
    </cofactor>
    <text evidence="1">Binds 1 Fe cation per subunit.</text>
</comment>
<comment type="subunit">
    <text evidence="1">Homodimer.</text>
</comment>
<comment type="similarity">
    <text evidence="1">Belongs to the LuxS family.</text>
</comment>
<feature type="chain" id="PRO_0000172277" description="S-ribosylhomocysteine lyase">
    <location>
        <begin position="1"/>
        <end position="172"/>
    </location>
</feature>
<feature type="binding site" evidence="1">
    <location>
        <position position="54"/>
    </location>
    <ligand>
        <name>Fe cation</name>
        <dbReference type="ChEBI" id="CHEBI:24875"/>
    </ligand>
</feature>
<feature type="binding site" evidence="1">
    <location>
        <position position="58"/>
    </location>
    <ligand>
        <name>Fe cation</name>
        <dbReference type="ChEBI" id="CHEBI:24875"/>
    </ligand>
</feature>
<feature type="binding site" evidence="1">
    <location>
        <position position="128"/>
    </location>
    <ligand>
        <name>Fe cation</name>
        <dbReference type="ChEBI" id="CHEBI:24875"/>
    </ligand>
</feature>
<accession>Q9AHK1</accession>
<proteinExistence type="inferred from homology"/>